<sequence length="133" mass="14662">MKTFPVSIVTPDGPVYEKEVEMVSVKAESGEMGILPGHIPTVAPLKISAVRLKNGGHTDYVAVSGGFIEVRPDKVTVLSSSAEEANHIDIHRANEAKRRAEQRMQDKQAHVDFKRAEMALQRAVNRLNVSDMK</sequence>
<accession>C3LFH8</accession>
<organism>
    <name type="scientific">Bacillus anthracis (strain CDC 684 / NRRL 3495)</name>
    <dbReference type="NCBI Taxonomy" id="568206"/>
    <lineage>
        <taxon>Bacteria</taxon>
        <taxon>Bacillati</taxon>
        <taxon>Bacillota</taxon>
        <taxon>Bacilli</taxon>
        <taxon>Bacillales</taxon>
        <taxon>Bacillaceae</taxon>
        <taxon>Bacillus</taxon>
        <taxon>Bacillus cereus group</taxon>
    </lineage>
</organism>
<evidence type="ECO:0000255" key="1">
    <source>
        <dbReference type="HAMAP-Rule" id="MF_00530"/>
    </source>
</evidence>
<gene>
    <name evidence="1" type="primary">atpC</name>
    <name type="ordered locus">BAMEG_5593</name>
</gene>
<comment type="function">
    <text evidence="1">Produces ATP from ADP in the presence of a proton gradient across the membrane.</text>
</comment>
<comment type="subunit">
    <text evidence="1">F-type ATPases have 2 components, CF(1) - the catalytic core - and CF(0) - the membrane proton channel. CF(1) has five subunits: alpha(3), beta(3), gamma(1), delta(1), epsilon(1). CF(0) has three main subunits: a, b and c.</text>
</comment>
<comment type="subcellular location">
    <subcellularLocation>
        <location evidence="1">Cell membrane</location>
        <topology evidence="1">Peripheral membrane protein</topology>
    </subcellularLocation>
</comment>
<comment type="similarity">
    <text evidence="1">Belongs to the ATPase epsilon chain family.</text>
</comment>
<reference key="1">
    <citation type="submission" date="2008-10" db="EMBL/GenBank/DDBJ databases">
        <title>Genome sequence of Bacillus anthracis str. CDC 684.</title>
        <authorList>
            <person name="Dodson R.J."/>
            <person name="Munk A.C."/>
            <person name="Brettin T."/>
            <person name="Bruce D."/>
            <person name="Detter C."/>
            <person name="Tapia R."/>
            <person name="Han C."/>
            <person name="Sutton G."/>
            <person name="Sims D."/>
        </authorList>
    </citation>
    <scope>NUCLEOTIDE SEQUENCE [LARGE SCALE GENOMIC DNA]</scope>
    <source>
        <strain>CDC 684 / NRRL 3495</strain>
    </source>
</reference>
<proteinExistence type="inferred from homology"/>
<protein>
    <recommendedName>
        <fullName evidence="1">ATP synthase epsilon chain</fullName>
    </recommendedName>
    <alternativeName>
        <fullName evidence="1">ATP synthase F1 sector epsilon subunit</fullName>
    </alternativeName>
    <alternativeName>
        <fullName evidence="1">F-ATPase epsilon subunit</fullName>
    </alternativeName>
</protein>
<name>ATPE_BACAC</name>
<feature type="chain" id="PRO_1000146309" description="ATP synthase epsilon chain">
    <location>
        <begin position="1"/>
        <end position="133"/>
    </location>
</feature>
<dbReference type="EMBL" id="CP001215">
    <property type="protein sequence ID" value="ACP16709.1"/>
    <property type="molecule type" value="Genomic_DNA"/>
</dbReference>
<dbReference type="RefSeq" id="WP_000847214.1">
    <property type="nucleotide sequence ID" value="NC_012581.1"/>
</dbReference>
<dbReference type="SMR" id="C3LFH8"/>
<dbReference type="GeneID" id="64186571"/>
<dbReference type="KEGG" id="bah:BAMEG_5593"/>
<dbReference type="HOGENOM" id="CLU_084338_1_3_9"/>
<dbReference type="GO" id="GO:0005886">
    <property type="term" value="C:plasma membrane"/>
    <property type="evidence" value="ECO:0007669"/>
    <property type="project" value="UniProtKB-SubCell"/>
</dbReference>
<dbReference type="GO" id="GO:0045259">
    <property type="term" value="C:proton-transporting ATP synthase complex"/>
    <property type="evidence" value="ECO:0007669"/>
    <property type="project" value="UniProtKB-KW"/>
</dbReference>
<dbReference type="GO" id="GO:0005524">
    <property type="term" value="F:ATP binding"/>
    <property type="evidence" value="ECO:0007669"/>
    <property type="project" value="UniProtKB-UniRule"/>
</dbReference>
<dbReference type="GO" id="GO:0046933">
    <property type="term" value="F:proton-transporting ATP synthase activity, rotational mechanism"/>
    <property type="evidence" value="ECO:0007669"/>
    <property type="project" value="UniProtKB-UniRule"/>
</dbReference>
<dbReference type="CDD" id="cd12152">
    <property type="entry name" value="F1-ATPase_delta"/>
    <property type="match status" value="1"/>
</dbReference>
<dbReference type="FunFam" id="1.20.5.440:FF:000001">
    <property type="entry name" value="ATP synthase epsilon chain"/>
    <property type="match status" value="1"/>
</dbReference>
<dbReference type="FunFam" id="2.60.15.10:FF:000001">
    <property type="entry name" value="ATP synthase epsilon chain"/>
    <property type="match status" value="1"/>
</dbReference>
<dbReference type="Gene3D" id="1.20.5.440">
    <property type="entry name" value="ATP synthase delta/epsilon subunit, C-terminal domain"/>
    <property type="match status" value="1"/>
</dbReference>
<dbReference type="Gene3D" id="2.60.15.10">
    <property type="entry name" value="F0F1 ATP synthase delta/epsilon subunit, N-terminal"/>
    <property type="match status" value="1"/>
</dbReference>
<dbReference type="HAMAP" id="MF_00530">
    <property type="entry name" value="ATP_synth_epsil_bac"/>
    <property type="match status" value="1"/>
</dbReference>
<dbReference type="InterPro" id="IPR036794">
    <property type="entry name" value="ATP_F1_dsu/esu_C_sf"/>
</dbReference>
<dbReference type="InterPro" id="IPR001469">
    <property type="entry name" value="ATP_synth_F1_dsu/esu"/>
</dbReference>
<dbReference type="InterPro" id="IPR020546">
    <property type="entry name" value="ATP_synth_F1_dsu/esu_N"/>
</dbReference>
<dbReference type="InterPro" id="IPR020547">
    <property type="entry name" value="ATP_synth_F1_esu_C"/>
</dbReference>
<dbReference type="InterPro" id="IPR036771">
    <property type="entry name" value="ATPsynth_dsu/esu_N"/>
</dbReference>
<dbReference type="NCBIfam" id="TIGR01216">
    <property type="entry name" value="ATP_synt_epsi"/>
    <property type="match status" value="1"/>
</dbReference>
<dbReference type="NCBIfam" id="NF001846">
    <property type="entry name" value="PRK00571.1-3"/>
    <property type="match status" value="1"/>
</dbReference>
<dbReference type="NCBIfam" id="NF009980">
    <property type="entry name" value="PRK13446.1"/>
    <property type="match status" value="1"/>
</dbReference>
<dbReference type="PANTHER" id="PTHR13822">
    <property type="entry name" value="ATP SYNTHASE DELTA/EPSILON CHAIN"/>
    <property type="match status" value="1"/>
</dbReference>
<dbReference type="PANTHER" id="PTHR13822:SF10">
    <property type="entry name" value="ATP SYNTHASE EPSILON CHAIN, CHLOROPLASTIC"/>
    <property type="match status" value="1"/>
</dbReference>
<dbReference type="Pfam" id="PF00401">
    <property type="entry name" value="ATP-synt_DE"/>
    <property type="match status" value="1"/>
</dbReference>
<dbReference type="Pfam" id="PF02823">
    <property type="entry name" value="ATP-synt_DE_N"/>
    <property type="match status" value="1"/>
</dbReference>
<dbReference type="SUPFAM" id="SSF46604">
    <property type="entry name" value="Epsilon subunit of F1F0-ATP synthase C-terminal domain"/>
    <property type="match status" value="1"/>
</dbReference>
<dbReference type="SUPFAM" id="SSF51344">
    <property type="entry name" value="Epsilon subunit of F1F0-ATP synthase N-terminal domain"/>
    <property type="match status" value="1"/>
</dbReference>
<keyword id="KW-0066">ATP synthesis</keyword>
<keyword id="KW-1003">Cell membrane</keyword>
<keyword id="KW-0139">CF(1)</keyword>
<keyword id="KW-0375">Hydrogen ion transport</keyword>
<keyword id="KW-0406">Ion transport</keyword>
<keyword id="KW-0472">Membrane</keyword>
<keyword id="KW-0813">Transport</keyword>